<dbReference type="EC" id="2.1.1.17" evidence="1"/>
<dbReference type="EMBL" id="CU638744">
    <property type="protein sequence ID" value="CAP71370.1"/>
    <property type="molecule type" value="Genomic_DNA"/>
</dbReference>
<dbReference type="EMBL" id="FO904941">
    <property type="protein sequence ID" value="CDP30770.1"/>
    <property type="molecule type" value="Genomic_DNA"/>
</dbReference>
<dbReference type="RefSeq" id="XP_001910236.1">
    <property type="nucleotide sequence ID" value="XM_001910201.1"/>
</dbReference>
<dbReference type="SMR" id="B2B2N5"/>
<dbReference type="FunCoup" id="B2B2N5">
    <property type="interactions" value="59"/>
</dbReference>
<dbReference type="STRING" id="515849.B2B2N5"/>
<dbReference type="GeneID" id="6195149"/>
<dbReference type="KEGG" id="pan:PODANSg7273"/>
<dbReference type="VEuPathDB" id="FungiDB:PODANS_6_2600"/>
<dbReference type="eggNOG" id="ENOG502QRGH">
    <property type="taxonomic scope" value="Eukaryota"/>
</dbReference>
<dbReference type="HOGENOM" id="CLU_005987_0_1_1"/>
<dbReference type="InParanoid" id="B2B2N5"/>
<dbReference type="OrthoDB" id="4583at2759"/>
<dbReference type="UniPathway" id="UPA00753"/>
<dbReference type="Proteomes" id="UP000001197">
    <property type="component" value="Chromosome 6"/>
</dbReference>
<dbReference type="GO" id="GO:0005789">
    <property type="term" value="C:endoplasmic reticulum membrane"/>
    <property type="evidence" value="ECO:0007669"/>
    <property type="project" value="UniProtKB-SubCell"/>
</dbReference>
<dbReference type="GO" id="GO:0004608">
    <property type="term" value="F:phosphatidylethanolamine N-methyltransferase activity"/>
    <property type="evidence" value="ECO:0007669"/>
    <property type="project" value="UniProtKB-UniRule"/>
</dbReference>
<dbReference type="GO" id="GO:0032259">
    <property type="term" value="P:methylation"/>
    <property type="evidence" value="ECO:0007669"/>
    <property type="project" value="UniProtKB-KW"/>
</dbReference>
<dbReference type="GO" id="GO:0006656">
    <property type="term" value="P:phosphatidylcholine biosynthetic process"/>
    <property type="evidence" value="ECO:0007669"/>
    <property type="project" value="UniProtKB-UniRule"/>
</dbReference>
<dbReference type="FunFam" id="2.60.40.2840:FF:000006">
    <property type="entry name" value="Phosphatidylethanolamine N-methyltransferase"/>
    <property type="match status" value="1"/>
</dbReference>
<dbReference type="Gene3D" id="2.60.40.2840">
    <property type="match status" value="1"/>
</dbReference>
<dbReference type="HAMAP" id="MF_03217">
    <property type="entry name" value="PEMT"/>
    <property type="match status" value="1"/>
</dbReference>
<dbReference type="InterPro" id="IPR007318">
    <property type="entry name" value="Phopholipid_MeTrfase"/>
</dbReference>
<dbReference type="InterPro" id="IPR016219">
    <property type="entry name" value="Phosphatid-EA_MeTrfase_fun"/>
</dbReference>
<dbReference type="PANTHER" id="PTHR32138">
    <property type="entry name" value="PHOSPHATIDYLETHANOLAMINE N-METHYLTRANSFERASE"/>
    <property type="match status" value="1"/>
</dbReference>
<dbReference type="PANTHER" id="PTHR32138:SF0">
    <property type="entry name" value="PHOSPHATIDYLETHANOLAMINE N-METHYLTRANSFERASE"/>
    <property type="match status" value="1"/>
</dbReference>
<dbReference type="Pfam" id="PF04191">
    <property type="entry name" value="PEMT"/>
    <property type="match status" value="2"/>
</dbReference>
<dbReference type="PIRSF" id="PIRSF000383">
    <property type="entry name" value="PEAMT"/>
    <property type="match status" value="1"/>
</dbReference>
<dbReference type="PROSITE" id="PS51598">
    <property type="entry name" value="SAM_CHO2"/>
    <property type="match status" value="1"/>
</dbReference>
<reference key="1">
    <citation type="journal article" date="2008" name="Genome Biol.">
        <title>The genome sequence of the model ascomycete fungus Podospora anserina.</title>
        <authorList>
            <person name="Espagne E."/>
            <person name="Lespinet O."/>
            <person name="Malagnac F."/>
            <person name="Da Silva C."/>
            <person name="Jaillon O."/>
            <person name="Porcel B.M."/>
            <person name="Couloux A."/>
            <person name="Aury J.-M."/>
            <person name="Segurens B."/>
            <person name="Poulain J."/>
            <person name="Anthouard V."/>
            <person name="Grossetete S."/>
            <person name="Khalili H."/>
            <person name="Coppin E."/>
            <person name="Dequard-Chablat M."/>
            <person name="Picard M."/>
            <person name="Contamine V."/>
            <person name="Arnaise S."/>
            <person name="Bourdais A."/>
            <person name="Berteaux-Lecellier V."/>
            <person name="Gautheret D."/>
            <person name="de Vries R.P."/>
            <person name="Battaglia E."/>
            <person name="Coutinho P.M."/>
            <person name="Danchin E.G.J."/>
            <person name="Henrissat B."/>
            <person name="El Khoury R."/>
            <person name="Sainsard-Chanet A."/>
            <person name="Boivin A."/>
            <person name="Pinan-Lucarre B."/>
            <person name="Sellem C.H."/>
            <person name="Debuchy R."/>
            <person name="Wincker P."/>
            <person name="Weissenbach J."/>
            <person name="Silar P."/>
        </authorList>
    </citation>
    <scope>NUCLEOTIDE SEQUENCE [LARGE SCALE GENOMIC DNA]</scope>
    <source>
        <strain>S / ATCC MYA-4624 / DSM 980 / FGSC 10383</strain>
    </source>
</reference>
<reference key="2">
    <citation type="journal article" date="2014" name="Genetics">
        <title>Maintaining two mating types: Structure of the mating type locus and its role in heterokaryosis in Podospora anserina.</title>
        <authorList>
            <person name="Grognet P."/>
            <person name="Bidard F."/>
            <person name="Kuchly C."/>
            <person name="Tong L.C.H."/>
            <person name="Coppin E."/>
            <person name="Benkhali J.A."/>
            <person name="Couloux A."/>
            <person name="Wincker P."/>
            <person name="Debuchy R."/>
            <person name="Silar P."/>
        </authorList>
    </citation>
    <scope>GENOME REANNOTATION</scope>
    <source>
        <strain>S / ATCC MYA-4624 / DSM 980 / FGSC 10383</strain>
    </source>
</reference>
<organism>
    <name type="scientific">Podospora anserina (strain S / ATCC MYA-4624 / DSM 980 / FGSC 10383)</name>
    <name type="common">Pleurage anserina</name>
    <dbReference type="NCBI Taxonomy" id="515849"/>
    <lineage>
        <taxon>Eukaryota</taxon>
        <taxon>Fungi</taxon>
        <taxon>Dikarya</taxon>
        <taxon>Ascomycota</taxon>
        <taxon>Pezizomycotina</taxon>
        <taxon>Sordariomycetes</taxon>
        <taxon>Sordariomycetidae</taxon>
        <taxon>Sordariales</taxon>
        <taxon>Podosporaceae</taxon>
        <taxon>Podospora</taxon>
        <taxon>Podospora anserina</taxon>
    </lineage>
</organism>
<name>CHO2_PODAN</name>
<sequence length="953" mass="108420">MSTTTAIDDPAGLKTTRQRNNQPQQSEIPLPSPSISDVDSDSNKGDDHRDAHVKKAYGRTPDGTGMHTLLSPSQTHDMVSQLLDPREPKNLSDYIVLGVLALHIWLAWAVPAPYNKYLLGFAFTFWRLAYNAGIGYLLTVQSKYTLLVTWARRLRAFEQPATNPRPWLYNLLKTELETKIPKDYKMDEAPIEYNTWLAFRRIVDLILMCDFVSYCLFAIVCAHTPEDEGLGMLLGRWVGGIALVGFNLWVKLDAHRVVKDYAWYWGDFFYLIEQELTFDGVFEMAPHPMYSIGYAGYYGISMMAASYDVLFISIAAHALQFVFLAFVENPHIEKTYNPPPPRLRAESEIGSQTEADALVTKELNGNSDIPQPVHNMIGSFDLFRVTDASSLIIVACFIALTVVTPTTRTYQTLAVVNAIFWRLWYSVGLGYILKKQSEKKMYTRHFLKFGESTGEAWRQWKGLYHISMILCHVSFLTACWKMYTYPEDWSYGSVLLKHVIGVSLIALQLWTSSSIYESLGEFGWFYGDFFFESPRPPTYNSIYRFLNNPERVLGAAGFWGLALITWSKAVFVMALVSQLLMLGFISFVEKPHMQKIYGQNLRKEAGLTKFVKKSLPAPVKRWQQGVDKVLDETKHFAEDFIDAALTRLSAGSSNFVKDTTALFHKPLRLSINRIDRDLAGYDPKHYKLSVEGEQLIAPDEKATRKESADARVPKDVKTKVFQYGAPIRVKWTAPANHSKKDWVGLYLVTDNRNRDFTEVPSLGRWIPTCRGQYDTTTDEGIVSYDEKVKSEGVEGPLVQGEMVFEGDKLWWTQGVYEFRYHHHGKHNVMSISEPFEVRIPLVVKEGTELTIEEAENALLPIVRNCLDRDPEIAPETVDEPWGAHVERDGKYAERVVYAIREMFAIEFSPAVVPADGNVKKLAWRVVNGRIALAPYSMSLQSRRPPTPVADSYK</sequence>
<proteinExistence type="inferred from homology"/>
<evidence type="ECO:0000255" key="1">
    <source>
        <dbReference type="HAMAP-Rule" id="MF_03217"/>
    </source>
</evidence>
<evidence type="ECO:0000256" key="2">
    <source>
        <dbReference type="SAM" id="MobiDB-lite"/>
    </source>
</evidence>
<comment type="function">
    <text evidence="1">Catalyzes the first step of the methylation pathway of phosphatidylcholine biosynthesis, the SAM-dependent methylation of phosphatidylethanolamine (PE) to phosphatidylmonomethylethanolamine (PMME).</text>
</comment>
<comment type="catalytic activity">
    <reaction evidence="1">
        <text>a 1,2-diacyl-sn-glycero-3-phosphoethanolamine + S-adenosyl-L-methionine = a 1,2-diacyl-sn-glycero-3-phospho-N-methylethanolamine + S-adenosyl-L-homocysteine + H(+)</text>
        <dbReference type="Rhea" id="RHEA:11164"/>
        <dbReference type="ChEBI" id="CHEBI:15378"/>
        <dbReference type="ChEBI" id="CHEBI:57856"/>
        <dbReference type="ChEBI" id="CHEBI:59789"/>
        <dbReference type="ChEBI" id="CHEBI:64573"/>
        <dbReference type="ChEBI" id="CHEBI:64612"/>
        <dbReference type="EC" id="2.1.1.17"/>
    </reaction>
</comment>
<comment type="pathway">
    <text evidence="1">Phospholipid metabolism; phosphatidylcholine biosynthesis.</text>
</comment>
<comment type="subcellular location">
    <subcellularLocation>
        <location evidence="1">Endoplasmic reticulum membrane</location>
        <topology evidence="1">Multi-pass membrane protein</topology>
    </subcellularLocation>
</comment>
<comment type="similarity">
    <text evidence="1">Belongs to the class VI-like SAM-binding methyltransferase superfamily. CHO2 family.</text>
</comment>
<accession>B2B2N5</accession>
<accession>A0A090CQ74</accession>
<feature type="chain" id="PRO_0000405910" description="Phosphatidylethanolamine N-methyltransferase">
    <location>
        <begin position="1"/>
        <end position="953"/>
    </location>
</feature>
<feature type="topological domain" description="Lumenal" evidence="1">
    <location>
        <begin position="1"/>
        <end position="93"/>
    </location>
</feature>
<feature type="transmembrane region" description="Helical" evidence="1">
    <location>
        <begin position="94"/>
        <end position="114"/>
    </location>
</feature>
<feature type="topological domain" description="Cytoplasmic" evidence="1">
    <location>
        <begin position="115"/>
        <end position="117"/>
    </location>
</feature>
<feature type="transmembrane region" description="Helical" evidence="1">
    <location>
        <begin position="118"/>
        <end position="138"/>
    </location>
</feature>
<feature type="topological domain" description="Lumenal" evidence="1">
    <location>
        <begin position="139"/>
        <end position="201"/>
    </location>
</feature>
<feature type="transmembrane region" description="Helical" evidence="1">
    <location>
        <begin position="202"/>
        <end position="222"/>
    </location>
</feature>
<feature type="topological domain" description="Cytoplasmic" evidence="1">
    <location>
        <begin position="223"/>
        <end position="229"/>
    </location>
</feature>
<feature type="transmembrane region" description="Helical" evidence="1">
    <location>
        <begin position="230"/>
        <end position="250"/>
    </location>
</feature>
<feature type="topological domain" description="Lumenal" evidence="1">
    <location>
        <begin position="251"/>
        <end position="279"/>
    </location>
</feature>
<feature type="transmembrane region" description="Helical" evidence="1">
    <location>
        <begin position="280"/>
        <end position="300"/>
    </location>
</feature>
<feature type="topological domain" description="Cytoplasmic" evidence="1">
    <location>
        <begin position="301"/>
        <end position="306"/>
    </location>
</feature>
<feature type="transmembrane region" description="Helical" evidence="1">
    <location>
        <begin position="307"/>
        <end position="327"/>
    </location>
</feature>
<feature type="topological domain" description="Lumenal" evidence="1">
    <location>
        <begin position="328"/>
        <end position="384"/>
    </location>
</feature>
<feature type="transmembrane region" description="Helical" evidence="1">
    <location>
        <begin position="385"/>
        <end position="405"/>
    </location>
</feature>
<feature type="topological domain" description="Cytoplasmic" evidence="1">
    <location>
        <begin position="406"/>
        <end position="412"/>
    </location>
</feature>
<feature type="transmembrane region" description="Helical" evidence="1">
    <location>
        <begin position="413"/>
        <end position="433"/>
    </location>
</feature>
<feature type="topological domain" description="Lumenal" evidence="1">
    <location>
        <begin position="434"/>
        <end position="459"/>
    </location>
</feature>
<feature type="transmembrane region" description="Helical" evidence="1">
    <location>
        <begin position="460"/>
        <end position="480"/>
    </location>
</feature>
<feature type="topological domain" description="Cytoplasmic" evidence="1">
    <location>
        <begin position="481"/>
        <end position="490"/>
    </location>
</feature>
<feature type="transmembrane region" description="Helical" evidence="1">
    <location>
        <begin position="491"/>
        <end position="511"/>
    </location>
</feature>
<feature type="topological domain" description="Lumenal" evidence="1">
    <location>
        <begin position="512"/>
        <end position="568"/>
    </location>
</feature>
<feature type="transmembrane region" description="Helical" evidence="1">
    <location>
        <begin position="569"/>
        <end position="589"/>
    </location>
</feature>
<feature type="topological domain" description="Cytoplasmic" evidence="1">
    <location>
        <begin position="590"/>
        <end position="953"/>
    </location>
</feature>
<feature type="region of interest" description="Disordered" evidence="2">
    <location>
        <begin position="1"/>
        <end position="49"/>
    </location>
</feature>
<feature type="compositionally biased region" description="Polar residues" evidence="2">
    <location>
        <begin position="18"/>
        <end position="27"/>
    </location>
</feature>
<protein>
    <recommendedName>
        <fullName evidence="1">Phosphatidylethanolamine N-methyltransferase</fullName>
        <shortName evidence="1">PE methyltransferase</shortName>
        <shortName evidence="1">PEAMT</shortName>
        <shortName evidence="1">PEMT</shortName>
        <ecNumber evidence="1">2.1.1.17</ecNumber>
    </recommendedName>
</protein>
<keyword id="KW-0256">Endoplasmic reticulum</keyword>
<keyword id="KW-0444">Lipid biosynthesis</keyword>
<keyword id="KW-0443">Lipid metabolism</keyword>
<keyword id="KW-0472">Membrane</keyword>
<keyword id="KW-0489">Methyltransferase</keyword>
<keyword id="KW-0594">Phospholipid biosynthesis</keyword>
<keyword id="KW-1208">Phospholipid metabolism</keyword>
<keyword id="KW-1185">Reference proteome</keyword>
<keyword id="KW-0949">S-adenosyl-L-methionine</keyword>
<keyword id="KW-0808">Transferase</keyword>
<keyword id="KW-0812">Transmembrane</keyword>
<keyword id="KW-1133">Transmembrane helix</keyword>
<gene>
    <name type="primary">CHO2</name>
    <name type="ordered locus">Pa_6_2600</name>
    <name type="ORF">PODANS_6_2600</name>
</gene>